<dbReference type="EC" id="3.1.26.4" evidence="1"/>
<dbReference type="EMBL" id="CP001657">
    <property type="protein sequence ID" value="ACT14159.1"/>
    <property type="molecule type" value="Genomic_DNA"/>
</dbReference>
<dbReference type="SMR" id="C6DC65"/>
<dbReference type="STRING" id="561230.PC1_3136"/>
<dbReference type="KEGG" id="pct:PC1_3136"/>
<dbReference type="eggNOG" id="COG0328">
    <property type="taxonomic scope" value="Bacteria"/>
</dbReference>
<dbReference type="HOGENOM" id="CLU_030894_6_0_6"/>
<dbReference type="OrthoDB" id="7845843at2"/>
<dbReference type="Proteomes" id="UP000002736">
    <property type="component" value="Chromosome"/>
</dbReference>
<dbReference type="GO" id="GO:0005737">
    <property type="term" value="C:cytoplasm"/>
    <property type="evidence" value="ECO:0007669"/>
    <property type="project" value="UniProtKB-SubCell"/>
</dbReference>
<dbReference type="GO" id="GO:0000287">
    <property type="term" value="F:magnesium ion binding"/>
    <property type="evidence" value="ECO:0007669"/>
    <property type="project" value="UniProtKB-UniRule"/>
</dbReference>
<dbReference type="GO" id="GO:0003676">
    <property type="term" value="F:nucleic acid binding"/>
    <property type="evidence" value="ECO:0007669"/>
    <property type="project" value="InterPro"/>
</dbReference>
<dbReference type="GO" id="GO:0004523">
    <property type="term" value="F:RNA-DNA hybrid ribonuclease activity"/>
    <property type="evidence" value="ECO:0007669"/>
    <property type="project" value="UniProtKB-UniRule"/>
</dbReference>
<dbReference type="GO" id="GO:0043137">
    <property type="term" value="P:DNA replication, removal of RNA primer"/>
    <property type="evidence" value="ECO:0007669"/>
    <property type="project" value="TreeGrafter"/>
</dbReference>
<dbReference type="CDD" id="cd09278">
    <property type="entry name" value="RNase_HI_prokaryote_like"/>
    <property type="match status" value="1"/>
</dbReference>
<dbReference type="FunFam" id="3.30.420.10:FF:000008">
    <property type="entry name" value="Ribonuclease H"/>
    <property type="match status" value="1"/>
</dbReference>
<dbReference type="Gene3D" id="3.30.420.10">
    <property type="entry name" value="Ribonuclease H-like superfamily/Ribonuclease H"/>
    <property type="match status" value="1"/>
</dbReference>
<dbReference type="HAMAP" id="MF_00042">
    <property type="entry name" value="RNase_H"/>
    <property type="match status" value="1"/>
</dbReference>
<dbReference type="InterPro" id="IPR050092">
    <property type="entry name" value="RNase_H"/>
</dbReference>
<dbReference type="InterPro" id="IPR012337">
    <property type="entry name" value="RNaseH-like_sf"/>
</dbReference>
<dbReference type="InterPro" id="IPR002156">
    <property type="entry name" value="RNaseH_domain"/>
</dbReference>
<dbReference type="InterPro" id="IPR036397">
    <property type="entry name" value="RNaseH_sf"/>
</dbReference>
<dbReference type="InterPro" id="IPR022892">
    <property type="entry name" value="RNaseHI"/>
</dbReference>
<dbReference type="NCBIfam" id="NF001236">
    <property type="entry name" value="PRK00203.1"/>
    <property type="match status" value="1"/>
</dbReference>
<dbReference type="PANTHER" id="PTHR10642">
    <property type="entry name" value="RIBONUCLEASE H1"/>
    <property type="match status" value="1"/>
</dbReference>
<dbReference type="PANTHER" id="PTHR10642:SF26">
    <property type="entry name" value="RIBONUCLEASE H1"/>
    <property type="match status" value="1"/>
</dbReference>
<dbReference type="Pfam" id="PF00075">
    <property type="entry name" value="RNase_H"/>
    <property type="match status" value="1"/>
</dbReference>
<dbReference type="SUPFAM" id="SSF53098">
    <property type="entry name" value="Ribonuclease H-like"/>
    <property type="match status" value="1"/>
</dbReference>
<dbReference type="PROSITE" id="PS50879">
    <property type="entry name" value="RNASE_H_1"/>
    <property type="match status" value="1"/>
</dbReference>
<gene>
    <name evidence="1" type="primary">rnhA</name>
    <name type="ordered locus">PC1_3136</name>
</gene>
<reference key="1">
    <citation type="submission" date="2009-07" db="EMBL/GenBank/DDBJ databases">
        <title>Complete sequence of Pectobacterium carotovorum subsp. carotovorum PC1.</title>
        <authorList>
            <consortium name="US DOE Joint Genome Institute"/>
            <person name="Lucas S."/>
            <person name="Copeland A."/>
            <person name="Lapidus A."/>
            <person name="Glavina del Rio T."/>
            <person name="Tice H."/>
            <person name="Bruce D."/>
            <person name="Goodwin L."/>
            <person name="Pitluck S."/>
            <person name="Munk A.C."/>
            <person name="Brettin T."/>
            <person name="Detter J.C."/>
            <person name="Han C."/>
            <person name="Tapia R."/>
            <person name="Larimer F."/>
            <person name="Land M."/>
            <person name="Hauser L."/>
            <person name="Kyrpides N."/>
            <person name="Mikhailova N."/>
            <person name="Balakrishnan V."/>
            <person name="Glasner J."/>
            <person name="Perna N.T."/>
        </authorList>
    </citation>
    <scope>NUCLEOTIDE SEQUENCE [LARGE SCALE GENOMIC DNA]</scope>
    <source>
        <strain>PC1</strain>
    </source>
</reference>
<feature type="chain" id="PRO_1000202140" description="Ribonuclease H">
    <location>
        <begin position="1"/>
        <end position="154"/>
    </location>
</feature>
<feature type="domain" description="RNase H type-1" evidence="2">
    <location>
        <begin position="1"/>
        <end position="142"/>
    </location>
</feature>
<feature type="binding site" evidence="1">
    <location>
        <position position="10"/>
    </location>
    <ligand>
        <name>Mg(2+)</name>
        <dbReference type="ChEBI" id="CHEBI:18420"/>
        <label>1</label>
    </ligand>
</feature>
<feature type="binding site" evidence="1">
    <location>
        <position position="10"/>
    </location>
    <ligand>
        <name>Mg(2+)</name>
        <dbReference type="ChEBI" id="CHEBI:18420"/>
        <label>2</label>
    </ligand>
</feature>
<feature type="binding site" evidence="1">
    <location>
        <position position="48"/>
    </location>
    <ligand>
        <name>Mg(2+)</name>
        <dbReference type="ChEBI" id="CHEBI:18420"/>
        <label>1</label>
    </ligand>
</feature>
<feature type="binding site" evidence="1">
    <location>
        <position position="70"/>
    </location>
    <ligand>
        <name>Mg(2+)</name>
        <dbReference type="ChEBI" id="CHEBI:18420"/>
        <label>1</label>
    </ligand>
</feature>
<feature type="binding site" evidence="1">
    <location>
        <position position="134"/>
    </location>
    <ligand>
        <name>Mg(2+)</name>
        <dbReference type="ChEBI" id="CHEBI:18420"/>
        <label>2</label>
    </ligand>
</feature>
<keyword id="KW-0963">Cytoplasm</keyword>
<keyword id="KW-0255">Endonuclease</keyword>
<keyword id="KW-0378">Hydrolase</keyword>
<keyword id="KW-0460">Magnesium</keyword>
<keyword id="KW-0479">Metal-binding</keyword>
<keyword id="KW-0540">Nuclease</keyword>
<proteinExistence type="inferred from homology"/>
<name>RNH_PECCP</name>
<sequence length="154" mass="17368">MRKQVEIFTDGSCLGNPGPGGYGALLRYKQHEKPLSAGYRLTTNNRMELMAAIAALETLTTECDVVLCTDSQYVRQGITSWIHNWKKRGWKTADKKPVKNVDLWQRLDTAIQRHSVRWEWVKGHAGHPENERCDELARAAAGAPTLDDTGYQAE</sequence>
<organism>
    <name type="scientific">Pectobacterium carotovorum subsp. carotovorum (strain PC1)</name>
    <dbReference type="NCBI Taxonomy" id="561230"/>
    <lineage>
        <taxon>Bacteria</taxon>
        <taxon>Pseudomonadati</taxon>
        <taxon>Pseudomonadota</taxon>
        <taxon>Gammaproteobacteria</taxon>
        <taxon>Enterobacterales</taxon>
        <taxon>Pectobacteriaceae</taxon>
        <taxon>Pectobacterium</taxon>
    </lineage>
</organism>
<protein>
    <recommendedName>
        <fullName evidence="1">Ribonuclease H</fullName>
        <shortName evidence="1">RNase H</shortName>
        <ecNumber evidence="1">3.1.26.4</ecNumber>
    </recommendedName>
</protein>
<accession>C6DC65</accession>
<comment type="function">
    <text evidence="1">Endonuclease that specifically degrades the RNA of RNA-DNA hybrids.</text>
</comment>
<comment type="catalytic activity">
    <reaction evidence="1">
        <text>Endonucleolytic cleavage to 5'-phosphomonoester.</text>
        <dbReference type="EC" id="3.1.26.4"/>
    </reaction>
</comment>
<comment type="cofactor">
    <cofactor evidence="1">
        <name>Mg(2+)</name>
        <dbReference type="ChEBI" id="CHEBI:18420"/>
    </cofactor>
    <text evidence="1">Binds 1 Mg(2+) ion per subunit. May bind a second metal ion at a regulatory site, or after substrate binding.</text>
</comment>
<comment type="subunit">
    <text evidence="1">Monomer.</text>
</comment>
<comment type="subcellular location">
    <subcellularLocation>
        <location evidence="1">Cytoplasm</location>
    </subcellularLocation>
</comment>
<comment type="similarity">
    <text evidence="1">Belongs to the RNase H family.</text>
</comment>
<evidence type="ECO:0000255" key="1">
    <source>
        <dbReference type="HAMAP-Rule" id="MF_00042"/>
    </source>
</evidence>
<evidence type="ECO:0000255" key="2">
    <source>
        <dbReference type="PROSITE-ProRule" id="PRU00408"/>
    </source>
</evidence>